<comment type="function">
    <text evidence="1">Involved in iron-sulfur cluster biogenesis. Binds a 4Fe-4S cluster, can transfer this cluster to apoproteins, and thereby intervenes in the maturation of Fe/S proteins. Could also act as a scaffold/chaperone for damaged Fe/S proteins.</text>
</comment>
<comment type="cofactor">
    <cofactor evidence="1">
        <name>[4Fe-4S] cluster</name>
        <dbReference type="ChEBI" id="CHEBI:49883"/>
    </cofactor>
    <text evidence="1">Binds 1 [4Fe-4S] cluster per subunit. The cluster is presumably bound at the interface of two monomers.</text>
</comment>
<comment type="subunit">
    <text evidence="1">Homodimer.</text>
</comment>
<comment type="similarity">
    <text evidence="1">Belongs to the NfuA family.</text>
</comment>
<name>NFUA_YERP3</name>
<feature type="chain" id="PRO_1000069879" description="Fe/S biogenesis protein NfuA">
    <location>
        <begin position="1"/>
        <end position="191"/>
    </location>
</feature>
<feature type="binding site" evidence="1">
    <location>
        <position position="149"/>
    </location>
    <ligand>
        <name>[4Fe-4S] cluster</name>
        <dbReference type="ChEBI" id="CHEBI:49883"/>
    </ligand>
</feature>
<feature type="binding site" evidence="1">
    <location>
        <position position="152"/>
    </location>
    <ligand>
        <name>[4Fe-4S] cluster</name>
        <dbReference type="ChEBI" id="CHEBI:49883"/>
    </ligand>
</feature>
<dbReference type="EMBL" id="CP000720">
    <property type="protein sequence ID" value="ABS46241.1"/>
    <property type="molecule type" value="Genomic_DNA"/>
</dbReference>
<dbReference type="RefSeq" id="WP_002208924.1">
    <property type="nucleotide sequence ID" value="NC_009708.1"/>
</dbReference>
<dbReference type="SMR" id="A7FNW0"/>
<dbReference type="GeneID" id="57974473"/>
<dbReference type="KEGG" id="ypi:YpsIP31758_3990"/>
<dbReference type="HOGENOM" id="CLU_094569_0_0_6"/>
<dbReference type="Proteomes" id="UP000002412">
    <property type="component" value="Chromosome"/>
</dbReference>
<dbReference type="GO" id="GO:0051539">
    <property type="term" value="F:4 iron, 4 sulfur cluster binding"/>
    <property type="evidence" value="ECO:0007669"/>
    <property type="project" value="UniProtKB-UniRule"/>
</dbReference>
<dbReference type="GO" id="GO:0005506">
    <property type="term" value="F:iron ion binding"/>
    <property type="evidence" value="ECO:0007669"/>
    <property type="project" value="InterPro"/>
</dbReference>
<dbReference type="GO" id="GO:0016226">
    <property type="term" value="P:iron-sulfur cluster assembly"/>
    <property type="evidence" value="ECO:0007669"/>
    <property type="project" value="UniProtKB-UniRule"/>
</dbReference>
<dbReference type="GO" id="GO:0051604">
    <property type="term" value="P:protein maturation"/>
    <property type="evidence" value="ECO:0007669"/>
    <property type="project" value="UniProtKB-UniRule"/>
</dbReference>
<dbReference type="Gene3D" id="3.30.300.130">
    <property type="entry name" value="Fe-S cluster assembly (FSCA)"/>
    <property type="match status" value="1"/>
</dbReference>
<dbReference type="Gene3D" id="2.60.300.12">
    <property type="entry name" value="HesB-like domain"/>
    <property type="match status" value="1"/>
</dbReference>
<dbReference type="HAMAP" id="MF_01637">
    <property type="entry name" value="Fe_S_biogen_NfuA"/>
    <property type="match status" value="1"/>
</dbReference>
<dbReference type="InterPro" id="IPR017726">
    <property type="entry name" value="Fe/S_biogenesis_protein_NfuA"/>
</dbReference>
<dbReference type="InterPro" id="IPR000361">
    <property type="entry name" value="FeS_biogenesis"/>
</dbReference>
<dbReference type="InterPro" id="IPR034904">
    <property type="entry name" value="FSCA_dom_sf"/>
</dbReference>
<dbReference type="InterPro" id="IPR035903">
    <property type="entry name" value="HesB-like_dom_sf"/>
</dbReference>
<dbReference type="InterPro" id="IPR001075">
    <property type="entry name" value="NIF_FeS_clus_asmbl_NifU_C"/>
</dbReference>
<dbReference type="NCBIfam" id="NF008392">
    <property type="entry name" value="PRK11190.1"/>
    <property type="match status" value="1"/>
</dbReference>
<dbReference type="NCBIfam" id="TIGR03341">
    <property type="entry name" value="YhgI_GntY"/>
    <property type="match status" value="1"/>
</dbReference>
<dbReference type="PANTHER" id="PTHR11178:SF51">
    <property type="entry name" value="FE_S BIOGENESIS PROTEIN NFUA"/>
    <property type="match status" value="1"/>
</dbReference>
<dbReference type="PANTHER" id="PTHR11178">
    <property type="entry name" value="IRON-SULFUR CLUSTER SCAFFOLD PROTEIN NFU-RELATED"/>
    <property type="match status" value="1"/>
</dbReference>
<dbReference type="Pfam" id="PF01521">
    <property type="entry name" value="Fe-S_biosyn"/>
    <property type="match status" value="1"/>
</dbReference>
<dbReference type="Pfam" id="PF01106">
    <property type="entry name" value="NifU"/>
    <property type="match status" value="1"/>
</dbReference>
<dbReference type="SUPFAM" id="SSF117916">
    <property type="entry name" value="Fe-S cluster assembly (FSCA) domain-like"/>
    <property type="match status" value="1"/>
</dbReference>
<dbReference type="SUPFAM" id="SSF89360">
    <property type="entry name" value="HesB-like domain"/>
    <property type="match status" value="1"/>
</dbReference>
<keyword id="KW-0004">4Fe-4S</keyword>
<keyword id="KW-0408">Iron</keyword>
<keyword id="KW-0411">Iron-sulfur</keyword>
<keyword id="KW-0479">Metal-binding</keyword>
<organism>
    <name type="scientific">Yersinia pseudotuberculosis serotype O:1b (strain IP 31758)</name>
    <dbReference type="NCBI Taxonomy" id="349747"/>
    <lineage>
        <taxon>Bacteria</taxon>
        <taxon>Pseudomonadati</taxon>
        <taxon>Pseudomonadota</taxon>
        <taxon>Gammaproteobacteria</taxon>
        <taxon>Enterobacterales</taxon>
        <taxon>Yersiniaceae</taxon>
        <taxon>Yersinia</taxon>
    </lineage>
</organism>
<accession>A7FNW0</accession>
<proteinExistence type="inferred from homology"/>
<sequence>MITITDAAQSHFAKLLANQEEGTQIRVFVINPGTPTAECGVSYCPPDAVEATDTELKFEQLSAYVDELSVPYLQDAEIDFVTDQLGSQLTLKAPNAKMRKVDDSAPLMERVEYVLQSQINPQLAGHGGRVTLMEITPEGLAILQFGGGCNGCSMVDVTLKEGIEKELLQKFPELKGVRDLTEHQRGEHSYY</sequence>
<protein>
    <recommendedName>
        <fullName evidence="1">Fe/S biogenesis protein NfuA</fullName>
    </recommendedName>
</protein>
<evidence type="ECO:0000255" key="1">
    <source>
        <dbReference type="HAMAP-Rule" id="MF_01637"/>
    </source>
</evidence>
<gene>
    <name evidence="1" type="primary">nfuA</name>
    <name type="ordered locus">YpsIP31758_3990</name>
</gene>
<reference key="1">
    <citation type="journal article" date="2007" name="PLoS Genet.">
        <title>The complete genome sequence of Yersinia pseudotuberculosis IP31758, the causative agent of Far East scarlet-like fever.</title>
        <authorList>
            <person name="Eppinger M."/>
            <person name="Rosovitz M.J."/>
            <person name="Fricke W.F."/>
            <person name="Rasko D.A."/>
            <person name="Kokorina G."/>
            <person name="Fayolle C."/>
            <person name="Lindler L.E."/>
            <person name="Carniel E."/>
            <person name="Ravel J."/>
        </authorList>
    </citation>
    <scope>NUCLEOTIDE SEQUENCE [LARGE SCALE GENOMIC DNA]</scope>
    <source>
        <strain>IP 31758</strain>
    </source>
</reference>